<proteinExistence type="inferred from homology"/>
<name>RL4_METTP</name>
<organism>
    <name type="scientific">Methanothrix thermoacetophila (strain DSM 6194 / JCM 14653 / NBRC 101360 / PT)</name>
    <name type="common">Methanosaeta thermophila</name>
    <dbReference type="NCBI Taxonomy" id="349307"/>
    <lineage>
        <taxon>Archaea</taxon>
        <taxon>Methanobacteriati</taxon>
        <taxon>Methanobacteriota</taxon>
        <taxon>Stenosarchaea group</taxon>
        <taxon>Methanomicrobia</taxon>
        <taxon>Methanotrichales</taxon>
        <taxon>Methanotrichaceae</taxon>
        <taxon>Methanothrix</taxon>
    </lineage>
</organism>
<evidence type="ECO:0000255" key="1">
    <source>
        <dbReference type="HAMAP-Rule" id="MF_01328"/>
    </source>
</evidence>
<evidence type="ECO:0000305" key="2"/>
<sequence>MNAKIIDISGNPVGEIVLPAIFDEEYRPDLIKRAVLAAQANRLQPYGPHFYAGMNTSARSWGPGHGVSRVPRIVTGRRAAAVPMARGGRASHPPVPSKVLSEKINEKERIKAIRSAVAATAKPDIVAARGHLFSGELPIVVRGEIESISKTSELRRFLMAAGLWDDVMRAKNGRKVRAGKGKIRGRRFRQPRSILIVAAADNGIGRAARNLPGVDFVTADRLNAELLAPGTHAGRLTVWSEPSLKVLEERL</sequence>
<accession>A0B9W9</accession>
<protein>
    <recommendedName>
        <fullName evidence="1">Large ribosomal subunit protein uL4</fullName>
    </recommendedName>
    <alternativeName>
        <fullName evidence="2">50S ribosomal protein L4</fullName>
    </alternativeName>
</protein>
<reference key="1">
    <citation type="submission" date="2006-10" db="EMBL/GenBank/DDBJ databases">
        <title>Complete sequence of Methanosaeta thermophila PT.</title>
        <authorList>
            <consortium name="US DOE Joint Genome Institute"/>
            <person name="Copeland A."/>
            <person name="Lucas S."/>
            <person name="Lapidus A."/>
            <person name="Barry K."/>
            <person name="Detter J.C."/>
            <person name="Glavina del Rio T."/>
            <person name="Hammon N."/>
            <person name="Israni S."/>
            <person name="Pitluck S."/>
            <person name="Chain P."/>
            <person name="Malfatti S."/>
            <person name="Shin M."/>
            <person name="Vergez L."/>
            <person name="Schmutz J."/>
            <person name="Larimer F."/>
            <person name="Land M."/>
            <person name="Hauser L."/>
            <person name="Kyrpides N."/>
            <person name="Kim E."/>
            <person name="Smith K.S."/>
            <person name="Ingram-Smith C."/>
            <person name="Richardson P."/>
        </authorList>
    </citation>
    <scope>NUCLEOTIDE SEQUENCE [LARGE SCALE GENOMIC DNA]</scope>
    <source>
        <strain>DSM 6194 / JCM 14653 / NBRC 101360 / PT</strain>
    </source>
</reference>
<dbReference type="EMBL" id="CP000477">
    <property type="protein sequence ID" value="ABK15493.1"/>
    <property type="molecule type" value="Genomic_DNA"/>
</dbReference>
<dbReference type="RefSeq" id="WP_011696871.1">
    <property type="nucleotide sequence ID" value="NC_008553.1"/>
</dbReference>
<dbReference type="SMR" id="A0B9W9"/>
<dbReference type="STRING" id="349307.Mthe_1727"/>
<dbReference type="GeneID" id="4462920"/>
<dbReference type="KEGG" id="mtp:Mthe_1727"/>
<dbReference type="HOGENOM" id="CLU_026535_0_0_2"/>
<dbReference type="OrthoDB" id="10737at2157"/>
<dbReference type="Proteomes" id="UP000000674">
    <property type="component" value="Chromosome"/>
</dbReference>
<dbReference type="GO" id="GO:1990904">
    <property type="term" value="C:ribonucleoprotein complex"/>
    <property type="evidence" value="ECO:0007669"/>
    <property type="project" value="UniProtKB-KW"/>
</dbReference>
<dbReference type="GO" id="GO:0005840">
    <property type="term" value="C:ribosome"/>
    <property type="evidence" value="ECO:0007669"/>
    <property type="project" value="UniProtKB-KW"/>
</dbReference>
<dbReference type="GO" id="GO:0019843">
    <property type="term" value="F:rRNA binding"/>
    <property type="evidence" value="ECO:0007669"/>
    <property type="project" value="UniProtKB-UniRule"/>
</dbReference>
<dbReference type="GO" id="GO:0003735">
    <property type="term" value="F:structural constituent of ribosome"/>
    <property type="evidence" value="ECO:0007669"/>
    <property type="project" value="InterPro"/>
</dbReference>
<dbReference type="GO" id="GO:0006412">
    <property type="term" value="P:translation"/>
    <property type="evidence" value="ECO:0007669"/>
    <property type="project" value="UniProtKB-UniRule"/>
</dbReference>
<dbReference type="Gene3D" id="3.40.1370.10">
    <property type="match status" value="1"/>
</dbReference>
<dbReference type="HAMAP" id="MF_01328_A">
    <property type="entry name" value="Ribosomal_uL4_A"/>
    <property type="match status" value="1"/>
</dbReference>
<dbReference type="InterPro" id="IPR002136">
    <property type="entry name" value="Ribosomal_uL4"/>
</dbReference>
<dbReference type="InterPro" id="IPR023574">
    <property type="entry name" value="Ribosomal_uL4_dom_sf"/>
</dbReference>
<dbReference type="InterPro" id="IPR013000">
    <property type="entry name" value="Ribosomal_uL4_euk/arc_CS"/>
</dbReference>
<dbReference type="InterPro" id="IPR045240">
    <property type="entry name" value="Ribosomal_uL4_euk/arch"/>
</dbReference>
<dbReference type="InterPro" id="IPR019970">
    <property type="entry name" value="Ribosomall_uL4-arc"/>
</dbReference>
<dbReference type="NCBIfam" id="TIGR03672">
    <property type="entry name" value="rpl4p_arch"/>
    <property type="match status" value="1"/>
</dbReference>
<dbReference type="PANTHER" id="PTHR19431">
    <property type="entry name" value="60S RIBOSOMAL PROTEIN L4"/>
    <property type="match status" value="1"/>
</dbReference>
<dbReference type="Pfam" id="PF00573">
    <property type="entry name" value="Ribosomal_L4"/>
    <property type="match status" value="1"/>
</dbReference>
<dbReference type="SUPFAM" id="SSF52166">
    <property type="entry name" value="Ribosomal protein L4"/>
    <property type="match status" value="1"/>
</dbReference>
<dbReference type="PROSITE" id="PS00939">
    <property type="entry name" value="RIBOSOMAL_L1E"/>
    <property type="match status" value="1"/>
</dbReference>
<comment type="function">
    <text evidence="1">One of the primary rRNA binding proteins, this protein initially binds near the 5'-end of the 23S rRNA. It is important during the early stages of 50S assembly. It makes multiple contacts with different domains of the 23S rRNA in the assembled 50S subunit and ribosome.</text>
</comment>
<comment type="function">
    <text evidence="1">Forms part of the polypeptide exit tunnel.</text>
</comment>
<comment type="subunit">
    <text evidence="1">Part of the 50S ribosomal subunit.</text>
</comment>
<comment type="similarity">
    <text evidence="1">Belongs to the universal ribosomal protein uL4 family.</text>
</comment>
<feature type="chain" id="PRO_1000067596" description="Large ribosomal subunit protein uL4">
    <location>
        <begin position="1"/>
        <end position="251"/>
    </location>
</feature>
<keyword id="KW-1185">Reference proteome</keyword>
<keyword id="KW-0687">Ribonucleoprotein</keyword>
<keyword id="KW-0689">Ribosomal protein</keyword>
<keyword id="KW-0694">RNA-binding</keyword>
<keyword id="KW-0699">rRNA-binding</keyword>
<gene>
    <name evidence="1" type="primary">rpl4</name>
    <name type="ordered locus">Mthe_1727</name>
</gene>